<organismHost>
    <name type="scientific">Homo sapiens</name>
    <name type="common">Human</name>
    <dbReference type="NCBI Taxonomy" id="9606"/>
</organismHost>
<dbReference type="EMBL" id="U27200">
    <property type="protein sequence ID" value="AAC54472.1"/>
    <property type="status" value="ALT_SEQ"/>
    <property type="molecule type" value="Genomic_DNA"/>
</dbReference>
<dbReference type="SMR" id="Q74232"/>
<dbReference type="Proteomes" id="UP000007423">
    <property type="component" value="Segment"/>
</dbReference>
<dbReference type="GO" id="GO:0030430">
    <property type="term" value="C:host cell cytoplasm"/>
    <property type="evidence" value="ECO:0007669"/>
    <property type="project" value="UniProtKB-SubCell"/>
</dbReference>
<dbReference type="GO" id="GO:0044196">
    <property type="term" value="C:host cell nucleolus"/>
    <property type="evidence" value="ECO:0007669"/>
    <property type="project" value="UniProtKB-SubCell"/>
</dbReference>
<dbReference type="GO" id="GO:0003700">
    <property type="term" value="F:DNA-binding transcription factor activity"/>
    <property type="evidence" value="ECO:0007669"/>
    <property type="project" value="InterPro"/>
</dbReference>
<dbReference type="GO" id="GO:0003723">
    <property type="term" value="F:RNA binding"/>
    <property type="evidence" value="ECO:0007669"/>
    <property type="project" value="UniProtKB-KW"/>
</dbReference>
<dbReference type="GO" id="GO:0051028">
    <property type="term" value="P:mRNA transport"/>
    <property type="evidence" value="ECO:0007669"/>
    <property type="project" value="UniProtKB-KW"/>
</dbReference>
<dbReference type="Gene3D" id="6.10.140.630">
    <property type="match status" value="1"/>
</dbReference>
<dbReference type="InterPro" id="IPR000625">
    <property type="entry name" value="REV_protein"/>
</dbReference>
<dbReference type="Pfam" id="PF00424">
    <property type="entry name" value="REV"/>
    <property type="match status" value="1"/>
</dbReference>
<name>REV_HV2EH</name>
<evidence type="ECO:0000250" key="1"/>
<evidence type="ECO:0000256" key="2">
    <source>
        <dbReference type="SAM" id="MobiDB-lite"/>
    </source>
</evidence>
<accession>Q74232</accession>
<sequence>MNARERDLQKGLRLLHLLHQTNPYPQGPGTASQRRNRRRRWKQRGLQILALADRIHPLPDSPTEGPLDLAIQRLQNLIIKDLPNPPTSTPTAQASTCIPPIWDQLVPRSNPSSSQGCGRDSCERGEDLVGSPQESGRRDHCNTQEDQTRG</sequence>
<reference key="1">
    <citation type="journal article" date="1994" name="Virology">
        <title>HIV-2 EHO isolate has a divergent envelope gene and induces single cell killing by apoptosis.</title>
        <authorList>
            <person name="Rey-Cuille M.A."/>
            <person name="Galabru J."/>
            <person name="Laurent-Crawford A."/>
            <person name="Krust B."/>
            <person name="Montagnier L."/>
            <person name="Hovanessian A.G."/>
        </authorList>
    </citation>
    <scope>NUCLEOTIDE SEQUENCE [GENOMIC DNA]</scope>
</reference>
<reference key="2">
    <citation type="journal article" date="1995" name="AIDS Res. Hum. Retroviruses">
        <title>Nucleotide sequence of the HIV-2 EHO genome, a divergent HIV-2 isolate.</title>
        <authorList>
            <person name="Galabru J."/>
            <person name="Rey-Cuille M.A."/>
            <person name="Hovanessian A.G."/>
        </authorList>
    </citation>
    <scope>NUCLEOTIDE SEQUENCE [GENOMIC DNA]</scope>
</reference>
<feature type="chain" id="PRO_0000245010" description="Protein Rev">
    <location>
        <begin position="1"/>
        <end position="150"/>
    </location>
</feature>
<feature type="region of interest" description="Homomultimerization" evidence="1">
    <location>
        <begin position="14"/>
        <end position="22"/>
    </location>
</feature>
<feature type="region of interest" description="Disordered" evidence="2">
    <location>
        <begin position="19"/>
        <end position="39"/>
    </location>
</feature>
<feature type="region of interest" description="Disordered" evidence="2">
    <location>
        <begin position="102"/>
        <end position="150"/>
    </location>
</feature>
<feature type="short sequence motif" description="Nuclear localization signal and RNA-binding (RRE)" evidence="1">
    <location>
        <begin position="33"/>
        <end position="47"/>
    </location>
</feature>
<feature type="short sequence motif" description="Nuclear export signal and binding to XPO1" evidence="1">
    <location>
        <begin position="69"/>
        <end position="80"/>
    </location>
</feature>
<feature type="compositionally biased region" description="Polar residues" evidence="2">
    <location>
        <begin position="20"/>
        <end position="33"/>
    </location>
</feature>
<feature type="compositionally biased region" description="Polar residues" evidence="2">
    <location>
        <begin position="107"/>
        <end position="116"/>
    </location>
</feature>
<feature type="compositionally biased region" description="Basic and acidic residues" evidence="2">
    <location>
        <begin position="135"/>
        <end position="150"/>
    </location>
</feature>
<protein>
    <recommendedName>
        <fullName>Protein Rev</fullName>
    </recommendedName>
    <alternativeName>
        <fullName>Regulator of expression of viral proteins</fullName>
    </alternativeName>
</protein>
<organism>
    <name type="scientific">Human immunodeficiency virus type 2 subtype B (isolate EHO)</name>
    <name type="common">HIV-2</name>
    <dbReference type="NCBI Taxonomy" id="388821"/>
    <lineage>
        <taxon>Viruses</taxon>
        <taxon>Riboviria</taxon>
        <taxon>Pararnavirae</taxon>
        <taxon>Artverviricota</taxon>
        <taxon>Revtraviricetes</taxon>
        <taxon>Ortervirales</taxon>
        <taxon>Retroviridae</taxon>
        <taxon>Orthoretrovirinae</taxon>
        <taxon>Lentivirus</taxon>
        <taxon>Human immunodeficiency virus 2</taxon>
    </lineage>
</organism>
<comment type="function">
    <text evidence="1">Escorts unspliced or incompletely spliced viral pre-mRNAs (late transcripts) out of the nucleus of infected cells. These pre-mRNAs carry a recognition sequence called Rev responsive element (RRE) located in the env gene, that is not present in fully spliced viral mRNAs (early transcripts). This function is essential since most viral proteins are translated from unspliced or partially spliced pre-mRNAs which cannot exit the nucleus by the pathway used by fully processed cellular mRNAs (By similarity).</text>
</comment>
<comment type="subunit">
    <text evidence="1">Homomultimer; when bound to the RRE. Multimeric assembly is essential for activity (By similarity).</text>
</comment>
<comment type="subcellular location">
    <subcellularLocation>
        <location>Host nucleus</location>
        <location>Host nucleolus</location>
    </subcellularLocation>
    <subcellularLocation>
        <location>Host cytoplasm</location>
    </subcellularLocation>
    <text evidence="1">The presence of both nuclear import and nuclear export signals leads to continuous shuttling between the nucleus and cytoplasm.</text>
</comment>
<comment type="domain">
    <text evidence="1">The RNA-binding motif binds to the RRE, a stem-and-loop structure present in incompletely spliced viral pre-mRNAs. This region also contains the NLS which mediates nuclear localization. These overlapping functions prevent Rev bound to RRE from undesirable return to the nucleus. When Rev binds the RRE, the NLS becomes masked while the NES remains accessible (By similarity).</text>
</comment>
<gene>
    <name type="primary">rev</name>
</gene>
<proteinExistence type="inferred from homology"/>
<keyword id="KW-0014">AIDS</keyword>
<keyword id="KW-1035">Host cytoplasm</keyword>
<keyword id="KW-1048">Host nucleus</keyword>
<keyword id="KW-0509">mRNA transport</keyword>
<keyword id="KW-0694">RNA-binding</keyword>
<keyword id="KW-0813">Transport</keyword>